<feature type="chain" id="PRO_0000189759" description="Gamma-glutamyl phosphate reductase">
    <location>
        <begin position="1"/>
        <end position="415"/>
    </location>
</feature>
<sequence length="415" mass="45851">MSEVIEKAKRAKQASFKMALSTTDDKNEALQLISQAIINHKQEILTANALDIEEGKKKGLSEAVIDRIRLNEERLQDIADAILQVTILTDPIGEALEIIEKDNGLFITKKRVPIGVIGMVYEARPNVTVDAASLAIKTGNSVVLRGSSSAIESNKALIQVIHQSLASSSIPKEAVQLIEDTRREVANQFFQLNEYLDVLIPRGGKQLIDTVIKQSTVPVIETGAGNCHVYLDESAKVEMATEIVLNAKLQRPSVCNAIESLIIHRQWFEDHGLELLKTMQSHDIKIHGDSVVMEKFPPAIKAVERDWEKEYLSSEISVKIVDSVSEAIDHINRYGTRHSEAIITENKMNAEQFQLQVDAAAVYHNASTRFTDGFEFGYGAEIGISTQKLHARGPMGLEALTSTKFVISGSGQIRE</sequence>
<keyword id="KW-0028">Amino-acid biosynthesis</keyword>
<keyword id="KW-0963">Cytoplasm</keyword>
<keyword id="KW-0521">NADP</keyword>
<keyword id="KW-0560">Oxidoreductase</keyword>
<keyword id="KW-0641">Proline biosynthesis</keyword>
<keyword id="KW-1185">Reference proteome</keyword>
<organism>
    <name type="scientific">Oceanobacillus iheyensis (strain DSM 14371 / CIP 107618 / JCM 11309 / KCTC 3954 / HTE831)</name>
    <dbReference type="NCBI Taxonomy" id="221109"/>
    <lineage>
        <taxon>Bacteria</taxon>
        <taxon>Bacillati</taxon>
        <taxon>Bacillota</taxon>
        <taxon>Bacilli</taxon>
        <taxon>Bacillales</taxon>
        <taxon>Bacillaceae</taxon>
        <taxon>Oceanobacillus</taxon>
    </lineage>
</organism>
<protein>
    <recommendedName>
        <fullName evidence="1">Gamma-glutamyl phosphate reductase</fullName>
        <shortName evidence="1">GPR</shortName>
        <ecNumber evidence="1">1.2.1.41</ecNumber>
    </recommendedName>
    <alternativeName>
        <fullName evidence="1">Glutamate-5-semialdehyde dehydrogenase</fullName>
    </alternativeName>
    <alternativeName>
        <fullName evidence="1">Glutamyl-gamma-semialdehyde dehydrogenase</fullName>
        <shortName evidence="1">GSA dehydrogenase</shortName>
    </alternativeName>
</protein>
<reference key="1">
    <citation type="journal article" date="2002" name="Nucleic Acids Res.">
        <title>Genome sequence of Oceanobacillus iheyensis isolated from the Iheya Ridge and its unexpected adaptive capabilities to extreme environments.</title>
        <authorList>
            <person name="Takami H."/>
            <person name="Takaki Y."/>
            <person name="Uchiyama I."/>
        </authorList>
    </citation>
    <scope>NUCLEOTIDE SEQUENCE [LARGE SCALE GENOMIC DNA]</scope>
    <source>
        <strain>DSM 14371 / CIP 107618 / JCM 11309 / KCTC 3954 / HTE831</strain>
    </source>
</reference>
<accession>Q8CUQ4</accession>
<dbReference type="EC" id="1.2.1.41" evidence="1"/>
<dbReference type="EMBL" id="BA000028">
    <property type="protein sequence ID" value="BAC13009.1"/>
    <property type="molecule type" value="Genomic_DNA"/>
</dbReference>
<dbReference type="RefSeq" id="WP_011065455.1">
    <property type="nucleotide sequence ID" value="NC_004193.1"/>
</dbReference>
<dbReference type="SMR" id="Q8CUQ4"/>
<dbReference type="STRING" id="221109.gene:10733291"/>
<dbReference type="KEGG" id="oih:OB1053"/>
<dbReference type="eggNOG" id="COG0014">
    <property type="taxonomic scope" value="Bacteria"/>
</dbReference>
<dbReference type="HOGENOM" id="CLU_030231_0_0_9"/>
<dbReference type="OrthoDB" id="9809970at2"/>
<dbReference type="PhylomeDB" id="Q8CUQ4"/>
<dbReference type="UniPathway" id="UPA00098">
    <property type="reaction ID" value="UER00360"/>
</dbReference>
<dbReference type="Proteomes" id="UP000000822">
    <property type="component" value="Chromosome"/>
</dbReference>
<dbReference type="GO" id="GO:0005737">
    <property type="term" value="C:cytoplasm"/>
    <property type="evidence" value="ECO:0007669"/>
    <property type="project" value="UniProtKB-SubCell"/>
</dbReference>
<dbReference type="GO" id="GO:0004350">
    <property type="term" value="F:glutamate-5-semialdehyde dehydrogenase activity"/>
    <property type="evidence" value="ECO:0007669"/>
    <property type="project" value="UniProtKB-UniRule"/>
</dbReference>
<dbReference type="GO" id="GO:0050661">
    <property type="term" value="F:NADP binding"/>
    <property type="evidence" value="ECO:0007669"/>
    <property type="project" value="InterPro"/>
</dbReference>
<dbReference type="GO" id="GO:0055129">
    <property type="term" value="P:L-proline biosynthetic process"/>
    <property type="evidence" value="ECO:0007669"/>
    <property type="project" value="UniProtKB-UniRule"/>
</dbReference>
<dbReference type="CDD" id="cd07079">
    <property type="entry name" value="ALDH_F18-19_ProA-GPR"/>
    <property type="match status" value="1"/>
</dbReference>
<dbReference type="FunFam" id="3.40.309.10:FF:000006">
    <property type="entry name" value="Gamma-glutamyl phosphate reductase"/>
    <property type="match status" value="1"/>
</dbReference>
<dbReference type="Gene3D" id="3.40.605.10">
    <property type="entry name" value="Aldehyde Dehydrogenase, Chain A, domain 1"/>
    <property type="match status" value="1"/>
</dbReference>
<dbReference type="Gene3D" id="3.40.309.10">
    <property type="entry name" value="Aldehyde Dehydrogenase, Chain A, domain 2"/>
    <property type="match status" value="1"/>
</dbReference>
<dbReference type="HAMAP" id="MF_00412">
    <property type="entry name" value="ProA"/>
    <property type="match status" value="1"/>
</dbReference>
<dbReference type="InterPro" id="IPR016161">
    <property type="entry name" value="Ald_DH/histidinol_DH"/>
</dbReference>
<dbReference type="InterPro" id="IPR016163">
    <property type="entry name" value="Ald_DH_C"/>
</dbReference>
<dbReference type="InterPro" id="IPR016162">
    <property type="entry name" value="Ald_DH_N"/>
</dbReference>
<dbReference type="InterPro" id="IPR015590">
    <property type="entry name" value="Aldehyde_DH_dom"/>
</dbReference>
<dbReference type="InterPro" id="IPR020593">
    <property type="entry name" value="G-glutamylP_reductase_CS"/>
</dbReference>
<dbReference type="InterPro" id="IPR012134">
    <property type="entry name" value="Glu-5-SA_DH"/>
</dbReference>
<dbReference type="InterPro" id="IPR000965">
    <property type="entry name" value="GPR_dom"/>
</dbReference>
<dbReference type="NCBIfam" id="NF001221">
    <property type="entry name" value="PRK00197.1"/>
    <property type="match status" value="1"/>
</dbReference>
<dbReference type="NCBIfam" id="TIGR00407">
    <property type="entry name" value="proA"/>
    <property type="match status" value="1"/>
</dbReference>
<dbReference type="PANTHER" id="PTHR11063:SF8">
    <property type="entry name" value="DELTA-1-PYRROLINE-5-CARBOXYLATE SYNTHASE"/>
    <property type="match status" value="1"/>
</dbReference>
<dbReference type="PANTHER" id="PTHR11063">
    <property type="entry name" value="GLUTAMATE SEMIALDEHYDE DEHYDROGENASE"/>
    <property type="match status" value="1"/>
</dbReference>
<dbReference type="Pfam" id="PF00171">
    <property type="entry name" value="Aldedh"/>
    <property type="match status" value="1"/>
</dbReference>
<dbReference type="PIRSF" id="PIRSF000151">
    <property type="entry name" value="GPR"/>
    <property type="match status" value="1"/>
</dbReference>
<dbReference type="SUPFAM" id="SSF53720">
    <property type="entry name" value="ALDH-like"/>
    <property type="match status" value="1"/>
</dbReference>
<dbReference type="PROSITE" id="PS01223">
    <property type="entry name" value="PROA"/>
    <property type="match status" value="1"/>
</dbReference>
<comment type="function">
    <text evidence="1">Catalyzes the NADPH-dependent reduction of L-glutamate 5-phosphate into L-glutamate 5-semialdehyde and phosphate. The product spontaneously undergoes cyclization to form 1-pyrroline-5-carboxylate.</text>
</comment>
<comment type="catalytic activity">
    <reaction evidence="1">
        <text>L-glutamate 5-semialdehyde + phosphate + NADP(+) = L-glutamyl 5-phosphate + NADPH + H(+)</text>
        <dbReference type="Rhea" id="RHEA:19541"/>
        <dbReference type="ChEBI" id="CHEBI:15378"/>
        <dbReference type="ChEBI" id="CHEBI:43474"/>
        <dbReference type="ChEBI" id="CHEBI:57783"/>
        <dbReference type="ChEBI" id="CHEBI:58066"/>
        <dbReference type="ChEBI" id="CHEBI:58274"/>
        <dbReference type="ChEBI" id="CHEBI:58349"/>
        <dbReference type="EC" id="1.2.1.41"/>
    </reaction>
</comment>
<comment type="pathway">
    <text evidence="1">Amino-acid biosynthesis; L-proline biosynthesis; L-glutamate 5-semialdehyde from L-glutamate: step 2/2.</text>
</comment>
<comment type="subcellular location">
    <subcellularLocation>
        <location evidence="1">Cytoplasm</location>
    </subcellularLocation>
</comment>
<comment type="similarity">
    <text evidence="1">Belongs to the gamma-glutamyl phosphate reductase family.</text>
</comment>
<proteinExistence type="inferred from homology"/>
<gene>
    <name evidence="1" type="primary">proA</name>
    <name type="ordered locus">OB1053</name>
</gene>
<name>PROA_OCEIH</name>
<evidence type="ECO:0000255" key="1">
    <source>
        <dbReference type="HAMAP-Rule" id="MF_00412"/>
    </source>
</evidence>